<accession>B9UIY3</accession>
<protein>
    <recommendedName>
        <fullName evidence="3">Mucroporin</fullName>
    </recommendedName>
    <alternativeName>
        <fullName>Antimicrobial peptide 36.21</fullName>
    </alternativeName>
    <alternativeName>
        <fullName evidence="4">Non-disulfide-bridged peptide 4.5</fullName>
        <shortName evidence="4">NDBP-4.5</shortName>
    </alternativeName>
</protein>
<keyword id="KW-0027">Amidation</keyword>
<keyword id="KW-0044">Antibiotic</keyword>
<keyword id="KW-0929">Antimicrobial</keyword>
<keyword id="KW-0930">Antiviral protein</keyword>
<keyword id="KW-0165">Cleavage on pair of basic residues</keyword>
<keyword id="KW-0472">Membrane</keyword>
<keyword id="KW-0964">Secreted</keyword>
<keyword id="KW-0732">Signal</keyword>
<keyword id="KW-1052">Target cell membrane</keyword>
<keyword id="KW-1053">Target membrane</keyword>
<keyword id="KW-0812">Transmembrane</keyword>
<organism>
    <name type="scientific">Lychas mucronatus</name>
    <name type="common">Chinese swimming scorpion</name>
    <dbReference type="NCBI Taxonomy" id="172552"/>
    <lineage>
        <taxon>Eukaryota</taxon>
        <taxon>Metazoa</taxon>
        <taxon>Ecdysozoa</taxon>
        <taxon>Arthropoda</taxon>
        <taxon>Chelicerata</taxon>
        <taxon>Arachnida</taxon>
        <taxon>Scorpiones</taxon>
        <taxon>Buthida</taxon>
        <taxon>Buthoidea</taxon>
        <taxon>Buthidae</taxon>
        <taxon>Lychas</taxon>
    </lineage>
</organism>
<evidence type="ECO:0000250" key="1"/>
<evidence type="ECO:0000269" key="2">
    <source>
    </source>
</evidence>
<evidence type="ECO:0000303" key="3">
    <source>
    </source>
</evidence>
<evidence type="ECO:0000303" key="4">
    <source>
    </source>
</evidence>
<evidence type="ECO:0000305" key="5"/>
<feature type="signal peptide" evidence="1">
    <location>
        <begin position="1"/>
        <end position="22"/>
    </location>
</feature>
<feature type="peptide" id="PRO_0000403858" description="Mucroporin">
    <location>
        <begin position="23"/>
        <end position="39"/>
    </location>
</feature>
<feature type="propeptide" id="PRO_0000403859" evidence="1">
    <location>
        <begin position="45"/>
        <end position="74"/>
    </location>
</feature>
<feature type="modified residue" description="Lysine amide" evidence="1">
    <location>
        <position position="39"/>
    </location>
</feature>
<feature type="mutagenesis site" description="Increase in antibacterial activity; when associated with K-28 and 32-G-G-33 (mutant mucroporin-M1)." evidence="2">
    <original>G</original>
    <variation>R</variation>
    <location>
        <position position="25"/>
    </location>
</feature>
<feature type="mutagenesis site" description="Increase in antibacterial activity; when associated with R-25 and 32-G-G-33 (mutant mucroporin-M1)." evidence="2">
    <original>P</original>
    <variation>K</variation>
    <location>
        <position position="28"/>
    </location>
</feature>
<feature type="mutagenesis site" description="Increase in antibacterial activity; when associated with R-25 and K-28 (mutant mucroporin-M1)." evidence="2">
    <original>GG</original>
    <variation>KR</variation>
    <location>
        <begin position="32"/>
        <end position="33"/>
    </location>
</feature>
<name>NDB45_LYCMC</name>
<dbReference type="EMBL" id="EU669864">
    <property type="protein sequence ID" value="ACF93401.1"/>
    <property type="molecule type" value="mRNA"/>
</dbReference>
<dbReference type="EMBL" id="GT028857">
    <property type="status" value="NOT_ANNOTATED_CDS"/>
    <property type="molecule type" value="mRNA"/>
</dbReference>
<dbReference type="GO" id="GO:0005576">
    <property type="term" value="C:extracellular region"/>
    <property type="evidence" value="ECO:0007669"/>
    <property type="project" value="UniProtKB-SubCell"/>
</dbReference>
<dbReference type="GO" id="GO:0016020">
    <property type="term" value="C:membrane"/>
    <property type="evidence" value="ECO:0007669"/>
    <property type="project" value="UniProtKB-KW"/>
</dbReference>
<dbReference type="GO" id="GO:0044218">
    <property type="term" value="C:other organism cell membrane"/>
    <property type="evidence" value="ECO:0007669"/>
    <property type="project" value="UniProtKB-KW"/>
</dbReference>
<dbReference type="GO" id="GO:0042742">
    <property type="term" value="P:defense response to bacterium"/>
    <property type="evidence" value="ECO:0007669"/>
    <property type="project" value="UniProtKB-KW"/>
</dbReference>
<dbReference type="GO" id="GO:0050688">
    <property type="term" value="P:regulation of defense response to virus"/>
    <property type="evidence" value="ECO:0007669"/>
    <property type="project" value="UniProtKB-KW"/>
</dbReference>
<comment type="function">
    <text>Mucroporin: cationic host defense peptide that have antibacterial activity by breaking membranes. Is more effective on Gram-positive than on Gram-negative bacteria. Minimum inhibitory concentrations (MIC) are the following: MIC=&gt;100 ug/ml against E.coli AB94012, MIC=&gt;100 ug/ml against P.aeruginosa AB93066, MIC=25 ug/ml against B.thuringiensis AB92037, MIC=50 ug/ml against B.subtilis AB91021, MIC=25 ug/ml against S.aureus AB94004, and MIC=25 ug/ml against the methicillin-resistant coagulase-negative Staphylococcus. Its synthetic analog mucroporin-M1 is more effective. Does not show antiviral activity against any of measles, SARS-CoV, influenza H5N1, hepatitis B and HIV-1 viruses.</text>
</comment>
<comment type="function">
    <text>Mutant mucroporin-M1: can inhibit Gram-positive bacteria at low concentrations and antibiotic-resistant pathogens. Minimum inhibitory concentrations (MIC) are the following: MIC=12.5 ug/ml against E.coli AB94012, MIC=100 ug/ml against P.aeruginosa AB93066, MIC=25 ug/ml against B.thuringiensis AB92037, MIC=25 ug/ml against B.subtilis AB91021, MIC=5 ug/ml against S.aureus AB94004, and MIC=5 ug/ml against the methicillin-resistant coagulase-negative Staphylococcus. Also shows antiviral activities against measles (EC(50) of 7.15 ug/ml), SARS-CoV (EC(50) of 14.46 ug/ml), influenza H5N1 viruses (EC(50) of 2.10 mug/ml), HIV-1, and hepatitis B virus.</text>
</comment>
<comment type="subcellular location">
    <subcellularLocation>
        <location evidence="1">Secreted</location>
    </subcellularLocation>
    <subcellularLocation>
        <location>Target cell membrane</location>
    </subcellularLocation>
    <text evidence="1">Forms a helical membrane channel in the prey.</text>
</comment>
<comment type="tissue specificity">
    <text evidence="5">Expressed by the venom gland.</text>
</comment>
<comment type="similarity">
    <text evidence="5">Belongs to the non-disulfide-bridged peptide (NDBP) superfamily. Short antimicrobial peptide (group 4) family.</text>
</comment>
<proteinExistence type="evidence at protein level"/>
<sequence length="74" mass="8650">MKVKFLLAVFLIVLVVTDHCHALFGLIPSLIGGLVSAFKGRRKRQMEARFEPQNRNYRKRELDLEKLFANMPDY</sequence>
<reference key="1">
    <citation type="journal article" date="2008" name="Antimicrob. Agents Chemother.">
        <title>Mucroporin, the first cationic host defense peptide from the venom of Lychas mucronatus.</title>
        <authorList>
            <person name="Dai C."/>
            <person name="Ma Y."/>
            <person name="Zhao Z."/>
            <person name="Zhao R."/>
            <person name="Wang Q."/>
            <person name="Wu Y.-L."/>
            <person name="Cao Z.-J."/>
            <person name="Li W.-X."/>
        </authorList>
    </citation>
    <scope>NUCLEOTIDE SEQUENCE [MRNA]</scope>
    <scope>SYNTHESIS OF MUCROPORIN</scope>
    <scope>SYNTHESIS OF MUTANT MUCROPORIN-M1</scope>
    <scope>FUNCTION (MUCROPORIN)</scope>
    <scope>FUNCTION (MUCROPORIN-M1)</scope>
    <scope>MUTAGENESIS OF GLY-25; PRO-28 AND 32-GLY-GLY-33</scope>
    <source>
        <strain>Hainan</strain>
        <tissue>Venom gland</tissue>
    </source>
</reference>
<reference key="2">
    <citation type="journal article" date="2010" name="BMC Genomics">
        <title>Comparative venom gland transcriptome analysis of the scorpion Lychas mucronatus reveals intraspecific toxic gene diversity and new venomous components.</title>
        <authorList>
            <person name="Zhao R."/>
            <person name="Ma Y."/>
            <person name="He Y."/>
            <person name="Di Z."/>
            <person name="Wu Y.-L."/>
            <person name="Cao Z.-J."/>
            <person name="Li W.-X."/>
        </authorList>
    </citation>
    <scope>NUCLEOTIDE SEQUENCE [MRNA]</scope>
    <source>
        <strain>Yunnan</strain>
        <tissue>Venom gland</tissue>
    </source>
</reference>
<reference key="3">
    <citation type="journal article" date="2011" name="Peptides">
        <title>Virucidal activity of a scorpion venom peptide variant mucroporin-M1 against measles, SARS-CoV and influenza H5N1 viruses.</title>
        <authorList>
            <person name="Li Q."/>
            <person name="Zhao Z."/>
            <person name="Zhou D."/>
            <person name="Chen Y."/>
            <person name="Hong W."/>
            <person name="Cao L."/>
            <person name="Yang J."/>
            <person name="Zhang Y."/>
            <person name="Shi W."/>
            <person name="Cao Z."/>
            <person name="Wu Y."/>
            <person name="Yan H."/>
            <person name="Li W."/>
        </authorList>
    </citation>
    <scope>SYNTHESIS OF MUCROPORIN-M1</scope>
    <scope>FUNCTION (MUCROPORIN-M1)</scope>
</reference>
<reference key="4">
    <citation type="journal article" date="2012" name="J. Biol. Chem.">
        <title>Mucroporin-M1 inhibits hepatitis B virus replication by activating the mitogen-activated protein kinase (MAPK) pathway and down-regulating HNF4alpha in vitro and in vivo.</title>
        <authorList>
            <person name="Zhao Z."/>
            <person name="Hong W."/>
            <person name="Zeng Z."/>
            <person name="Wu Y."/>
            <person name="Hu K."/>
            <person name="Tian X."/>
            <person name="Li W."/>
            <person name="Cao Z."/>
        </authorList>
    </citation>
    <scope>SYNTHESIS OF MUCROPORIN-M1</scope>
    <scope>FUNCTION (MUCROPORIN-M1)</scope>
</reference>
<reference key="5">
    <citation type="journal article" date="2012" name="PLoS ONE">
        <title>Anti-HIV-1 activity of a new scorpion venom peptide derivative Kn2-7.</title>
        <authorList>
            <person name="Chen Y."/>
            <person name="Cao L."/>
            <person name="Zhong M."/>
            <person name="Zhang Y."/>
            <person name="Han C."/>
            <person name="Li Q."/>
            <person name="Yang J."/>
            <person name="Zhou D."/>
            <person name="Shi W."/>
            <person name="He B."/>
            <person name="Liu F."/>
            <person name="Yu J."/>
            <person name="Sun Y."/>
            <person name="Cao Y."/>
            <person name="Li Y."/>
            <person name="Li W."/>
            <person name="Guo D."/>
            <person name="Cao Z."/>
            <person name="Yan H."/>
        </authorList>
    </citation>
    <scope>SYNTHESIS OF MUCROPORIN</scope>
    <scope>SYNTHESIS OF VARIANT MUCROPORIN-M1</scope>
    <scope>FUNCTION (MUCROPORIN)</scope>
    <scope>FUNCTION (MUCROPORIN-M1)</scope>
</reference>
<reference key="6">
    <citation type="journal article" date="2014" name="Peptides">
        <title>Scorpion venom peptides with no disulfide bridges: a review.</title>
        <authorList>
            <person name="Almaaytah A."/>
            <person name="Albalas Q."/>
        </authorList>
    </citation>
    <scope>NOMENCLATURE</scope>
</reference>